<accession>A8GQ03</accession>
<keyword id="KW-0004">4Fe-4S</keyword>
<keyword id="KW-0963">Cytoplasm</keyword>
<keyword id="KW-0408">Iron</keyword>
<keyword id="KW-0411">Iron-sulfur</keyword>
<keyword id="KW-0479">Metal-binding</keyword>
<keyword id="KW-0949">S-adenosyl-L-methionine</keyword>
<keyword id="KW-0808">Transferase</keyword>
<keyword id="KW-0819">tRNA processing</keyword>
<sequence>MSKNLYIKTYGCQMNVYDSVKMQDLLYPFGYEPTENIEEADVIILNTCHIREKAAEKTYSELGRIKKLQDTRKKQGLNSAIIVVAGCVAQAEGEEIFTRTPYVDIVVGPQSYYNLPELISKIVRHAKHLIDLDFVEEAKFDNLPEQLYPQGASSFISVQEGCDKFCTFCVVPYTRGAEFSRNVEQVYREALQVVSGGAKEIMLLGQNVNAYNWKGSADKIFSLADLLKHLAQIPNLERLRYMTSHPIDMTDDLIQLHGTEPKLMPFLHLPVQSGSNKILKAMNRKHDREYYFDIINRLREARPDIVLSSDFIVGFPGETDEDFEDTLDLVRRVKYGQCYSFKYSPRPGTPGATRTDQIPEHIKSERLTILQKELMDQQLACNESCVGSTIKVLFDRSGKFDDQIIGKTIYMQSVYIQNPNKSLLGKIIDVKITKASLNSLTGEIL</sequence>
<organism>
    <name type="scientific">Rickettsia akari (strain Hartford)</name>
    <dbReference type="NCBI Taxonomy" id="293614"/>
    <lineage>
        <taxon>Bacteria</taxon>
        <taxon>Pseudomonadati</taxon>
        <taxon>Pseudomonadota</taxon>
        <taxon>Alphaproteobacteria</taxon>
        <taxon>Rickettsiales</taxon>
        <taxon>Rickettsiaceae</taxon>
        <taxon>Rickettsieae</taxon>
        <taxon>Rickettsia</taxon>
        <taxon>spotted fever group</taxon>
    </lineage>
</organism>
<comment type="function">
    <text evidence="1">Catalyzes the methylthiolation of N6-(dimethylallyl)adenosine (i(6)A), leading to the formation of 2-methylthio-N6-(dimethylallyl)adenosine (ms(2)i(6)A) at position 37 in tRNAs that read codons beginning with uridine.</text>
</comment>
<comment type="catalytic activity">
    <reaction evidence="1">
        <text>N(6)-dimethylallyladenosine(37) in tRNA + (sulfur carrier)-SH + AH2 + 2 S-adenosyl-L-methionine = 2-methylsulfanyl-N(6)-dimethylallyladenosine(37) in tRNA + (sulfur carrier)-H + 5'-deoxyadenosine + L-methionine + A + S-adenosyl-L-homocysteine + 2 H(+)</text>
        <dbReference type="Rhea" id="RHEA:37067"/>
        <dbReference type="Rhea" id="RHEA-COMP:10375"/>
        <dbReference type="Rhea" id="RHEA-COMP:10376"/>
        <dbReference type="Rhea" id="RHEA-COMP:14737"/>
        <dbReference type="Rhea" id="RHEA-COMP:14739"/>
        <dbReference type="ChEBI" id="CHEBI:13193"/>
        <dbReference type="ChEBI" id="CHEBI:15378"/>
        <dbReference type="ChEBI" id="CHEBI:17319"/>
        <dbReference type="ChEBI" id="CHEBI:17499"/>
        <dbReference type="ChEBI" id="CHEBI:29917"/>
        <dbReference type="ChEBI" id="CHEBI:57844"/>
        <dbReference type="ChEBI" id="CHEBI:57856"/>
        <dbReference type="ChEBI" id="CHEBI:59789"/>
        <dbReference type="ChEBI" id="CHEBI:64428"/>
        <dbReference type="ChEBI" id="CHEBI:74415"/>
        <dbReference type="ChEBI" id="CHEBI:74417"/>
        <dbReference type="EC" id="2.8.4.3"/>
    </reaction>
</comment>
<comment type="cofactor">
    <cofactor evidence="1">
        <name>[4Fe-4S] cluster</name>
        <dbReference type="ChEBI" id="CHEBI:49883"/>
    </cofactor>
    <text evidence="1">Binds 2 [4Fe-4S] clusters. One cluster is coordinated with 3 cysteines and an exchangeable S-adenosyl-L-methionine.</text>
</comment>
<comment type="subunit">
    <text evidence="1">Monomer.</text>
</comment>
<comment type="subcellular location">
    <subcellularLocation>
        <location evidence="1">Cytoplasm</location>
    </subcellularLocation>
</comment>
<comment type="similarity">
    <text evidence="1">Belongs to the methylthiotransferase family. MiaB subfamily.</text>
</comment>
<proteinExistence type="inferred from homology"/>
<feature type="chain" id="PRO_0000374501" description="tRNA-2-methylthio-N(6)-dimethylallyladenosine synthase">
    <location>
        <begin position="1"/>
        <end position="445"/>
    </location>
</feature>
<feature type="domain" description="MTTase N-terminal" evidence="1">
    <location>
        <begin position="3"/>
        <end position="124"/>
    </location>
</feature>
<feature type="domain" description="Radical SAM core" evidence="2">
    <location>
        <begin position="148"/>
        <end position="380"/>
    </location>
</feature>
<feature type="domain" description="TRAM" evidence="1">
    <location>
        <begin position="383"/>
        <end position="445"/>
    </location>
</feature>
<feature type="binding site" evidence="1">
    <location>
        <position position="12"/>
    </location>
    <ligand>
        <name>[4Fe-4S] cluster</name>
        <dbReference type="ChEBI" id="CHEBI:49883"/>
        <label>1</label>
    </ligand>
</feature>
<feature type="binding site" evidence="1">
    <location>
        <position position="48"/>
    </location>
    <ligand>
        <name>[4Fe-4S] cluster</name>
        <dbReference type="ChEBI" id="CHEBI:49883"/>
        <label>1</label>
    </ligand>
</feature>
<feature type="binding site" evidence="1">
    <location>
        <position position="87"/>
    </location>
    <ligand>
        <name>[4Fe-4S] cluster</name>
        <dbReference type="ChEBI" id="CHEBI:49883"/>
        <label>1</label>
    </ligand>
</feature>
<feature type="binding site" evidence="1">
    <location>
        <position position="162"/>
    </location>
    <ligand>
        <name>[4Fe-4S] cluster</name>
        <dbReference type="ChEBI" id="CHEBI:49883"/>
        <label>2</label>
        <note>4Fe-4S-S-AdoMet</note>
    </ligand>
</feature>
<feature type="binding site" evidence="1">
    <location>
        <position position="166"/>
    </location>
    <ligand>
        <name>[4Fe-4S] cluster</name>
        <dbReference type="ChEBI" id="CHEBI:49883"/>
        <label>2</label>
        <note>4Fe-4S-S-AdoMet</note>
    </ligand>
</feature>
<feature type="binding site" evidence="1">
    <location>
        <position position="169"/>
    </location>
    <ligand>
        <name>[4Fe-4S] cluster</name>
        <dbReference type="ChEBI" id="CHEBI:49883"/>
        <label>2</label>
        <note>4Fe-4S-S-AdoMet</note>
    </ligand>
</feature>
<gene>
    <name evidence="1" type="primary">miaB</name>
    <name type="ordered locus">A1C_06245</name>
</gene>
<protein>
    <recommendedName>
        <fullName evidence="1">tRNA-2-methylthio-N(6)-dimethylallyladenosine synthase</fullName>
        <ecNumber evidence="1">2.8.4.3</ecNumber>
    </recommendedName>
    <alternativeName>
        <fullName evidence="1">(Dimethylallyl)adenosine tRNA methylthiotransferase MiaB</fullName>
    </alternativeName>
    <alternativeName>
        <fullName evidence="1">tRNA-i(6)A37 methylthiotransferase</fullName>
    </alternativeName>
</protein>
<dbReference type="EC" id="2.8.4.3" evidence="1"/>
<dbReference type="EMBL" id="CP000847">
    <property type="protein sequence ID" value="ABV75478.1"/>
    <property type="molecule type" value="Genomic_DNA"/>
</dbReference>
<dbReference type="RefSeq" id="WP_012150107.1">
    <property type="nucleotide sequence ID" value="NC_009881.1"/>
</dbReference>
<dbReference type="SMR" id="A8GQ03"/>
<dbReference type="STRING" id="293614.A1C_06245"/>
<dbReference type="KEGG" id="rak:A1C_06245"/>
<dbReference type="eggNOG" id="COG0621">
    <property type="taxonomic scope" value="Bacteria"/>
</dbReference>
<dbReference type="HOGENOM" id="CLU_018697_2_2_5"/>
<dbReference type="Proteomes" id="UP000006830">
    <property type="component" value="Chromosome"/>
</dbReference>
<dbReference type="GO" id="GO:0005829">
    <property type="term" value="C:cytosol"/>
    <property type="evidence" value="ECO:0007669"/>
    <property type="project" value="TreeGrafter"/>
</dbReference>
<dbReference type="GO" id="GO:0051539">
    <property type="term" value="F:4 iron, 4 sulfur cluster binding"/>
    <property type="evidence" value="ECO:0007669"/>
    <property type="project" value="UniProtKB-UniRule"/>
</dbReference>
<dbReference type="GO" id="GO:0046872">
    <property type="term" value="F:metal ion binding"/>
    <property type="evidence" value="ECO:0007669"/>
    <property type="project" value="UniProtKB-KW"/>
</dbReference>
<dbReference type="GO" id="GO:0035597">
    <property type="term" value="F:N6-isopentenyladenosine methylthiotransferase activity"/>
    <property type="evidence" value="ECO:0007669"/>
    <property type="project" value="TreeGrafter"/>
</dbReference>
<dbReference type="CDD" id="cd01335">
    <property type="entry name" value="Radical_SAM"/>
    <property type="match status" value="1"/>
</dbReference>
<dbReference type="FunFam" id="3.40.50.12160:FF:000001">
    <property type="entry name" value="tRNA-2-methylthio-N(6)-dimethylallyladenosine synthase"/>
    <property type="match status" value="1"/>
</dbReference>
<dbReference type="FunFam" id="3.80.30.20:FF:000001">
    <property type="entry name" value="tRNA-2-methylthio-N(6)-dimethylallyladenosine synthase 2"/>
    <property type="match status" value="1"/>
</dbReference>
<dbReference type="Gene3D" id="3.40.50.12160">
    <property type="entry name" value="Methylthiotransferase, N-terminal domain"/>
    <property type="match status" value="1"/>
</dbReference>
<dbReference type="Gene3D" id="3.80.30.20">
    <property type="entry name" value="tm_1862 like domain"/>
    <property type="match status" value="1"/>
</dbReference>
<dbReference type="HAMAP" id="MF_01864">
    <property type="entry name" value="tRNA_metthiotr_MiaB"/>
    <property type="match status" value="1"/>
</dbReference>
<dbReference type="InterPro" id="IPR006638">
    <property type="entry name" value="Elp3/MiaA/NifB-like_rSAM"/>
</dbReference>
<dbReference type="InterPro" id="IPR005839">
    <property type="entry name" value="Methylthiotransferase"/>
</dbReference>
<dbReference type="InterPro" id="IPR020612">
    <property type="entry name" value="Methylthiotransferase_CS"/>
</dbReference>
<dbReference type="InterPro" id="IPR013848">
    <property type="entry name" value="Methylthiotransferase_N"/>
</dbReference>
<dbReference type="InterPro" id="IPR038135">
    <property type="entry name" value="Methylthiotransferase_N_sf"/>
</dbReference>
<dbReference type="InterPro" id="IPR006463">
    <property type="entry name" value="MiaB_methiolase"/>
</dbReference>
<dbReference type="InterPro" id="IPR007197">
    <property type="entry name" value="rSAM"/>
</dbReference>
<dbReference type="InterPro" id="IPR023404">
    <property type="entry name" value="rSAM_horseshoe"/>
</dbReference>
<dbReference type="InterPro" id="IPR002792">
    <property type="entry name" value="TRAM_dom"/>
</dbReference>
<dbReference type="NCBIfam" id="TIGR01574">
    <property type="entry name" value="miaB-methiolase"/>
    <property type="match status" value="1"/>
</dbReference>
<dbReference type="NCBIfam" id="TIGR00089">
    <property type="entry name" value="MiaB/RimO family radical SAM methylthiotransferase"/>
    <property type="match status" value="1"/>
</dbReference>
<dbReference type="PANTHER" id="PTHR43020">
    <property type="entry name" value="CDK5 REGULATORY SUBUNIT-ASSOCIATED PROTEIN 1"/>
    <property type="match status" value="1"/>
</dbReference>
<dbReference type="PANTHER" id="PTHR43020:SF2">
    <property type="entry name" value="MITOCHONDRIAL TRNA METHYLTHIOTRANSFERASE CDK5RAP1"/>
    <property type="match status" value="1"/>
</dbReference>
<dbReference type="Pfam" id="PF04055">
    <property type="entry name" value="Radical_SAM"/>
    <property type="match status" value="1"/>
</dbReference>
<dbReference type="Pfam" id="PF01938">
    <property type="entry name" value="TRAM"/>
    <property type="match status" value="1"/>
</dbReference>
<dbReference type="Pfam" id="PF00919">
    <property type="entry name" value="UPF0004"/>
    <property type="match status" value="1"/>
</dbReference>
<dbReference type="SFLD" id="SFLDF00273">
    <property type="entry name" value="(dimethylallyl)adenosine_tRNA"/>
    <property type="match status" value="1"/>
</dbReference>
<dbReference type="SFLD" id="SFLDG01082">
    <property type="entry name" value="B12-binding_domain_containing"/>
    <property type="match status" value="1"/>
</dbReference>
<dbReference type="SFLD" id="SFLDS00029">
    <property type="entry name" value="Radical_SAM"/>
    <property type="match status" value="1"/>
</dbReference>
<dbReference type="SMART" id="SM00729">
    <property type="entry name" value="Elp3"/>
    <property type="match status" value="1"/>
</dbReference>
<dbReference type="SUPFAM" id="SSF102114">
    <property type="entry name" value="Radical SAM enzymes"/>
    <property type="match status" value="1"/>
</dbReference>
<dbReference type="PROSITE" id="PS51449">
    <property type="entry name" value="MTTASE_N"/>
    <property type="match status" value="1"/>
</dbReference>
<dbReference type="PROSITE" id="PS01278">
    <property type="entry name" value="MTTASE_RADICAL"/>
    <property type="match status" value="1"/>
</dbReference>
<dbReference type="PROSITE" id="PS51918">
    <property type="entry name" value="RADICAL_SAM"/>
    <property type="match status" value="1"/>
</dbReference>
<dbReference type="PROSITE" id="PS50926">
    <property type="entry name" value="TRAM"/>
    <property type="match status" value="1"/>
</dbReference>
<reference key="1">
    <citation type="submission" date="2007-09" db="EMBL/GenBank/DDBJ databases">
        <title>Complete genome sequence of Rickettsia akari.</title>
        <authorList>
            <person name="Madan A."/>
            <person name="Fahey J."/>
            <person name="Helton E."/>
            <person name="Ketteman M."/>
            <person name="Madan A."/>
            <person name="Rodrigues S."/>
            <person name="Sanchez A."/>
            <person name="Whiting M."/>
            <person name="Dasch G."/>
            <person name="Eremeeva M."/>
        </authorList>
    </citation>
    <scope>NUCLEOTIDE SEQUENCE [LARGE SCALE GENOMIC DNA]</scope>
    <source>
        <strain>Hartford</strain>
    </source>
</reference>
<name>MIAB_RICAH</name>
<evidence type="ECO:0000255" key="1">
    <source>
        <dbReference type="HAMAP-Rule" id="MF_01864"/>
    </source>
</evidence>
<evidence type="ECO:0000255" key="2">
    <source>
        <dbReference type="PROSITE-ProRule" id="PRU01266"/>
    </source>
</evidence>